<dbReference type="EC" id="5.3.1.1" evidence="1"/>
<dbReference type="EMBL" id="AJ012065">
    <property type="protein sequence ID" value="CAB66160.1"/>
    <property type="molecule type" value="Genomic_DNA"/>
</dbReference>
<dbReference type="EMBL" id="CP002278">
    <property type="protein sequence ID" value="ADP76960.1"/>
    <property type="molecule type" value="Genomic_DNA"/>
</dbReference>
<dbReference type="SMR" id="Q9UWN5"/>
<dbReference type="STRING" id="523846.Mfer_0157"/>
<dbReference type="KEGG" id="mfv:Mfer_0157"/>
<dbReference type="HOGENOM" id="CLU_104921_0_0_2"/>
<dbReference type="UniPathway" id="UPA00109">
    <property type="reaction ID" value="UER00189"/>
</dbReference>
<dbReference type="UniPathway" id="UPA00138"/>
<dbReference type="Proteomes" id="UP000002315">
    <property type="component" value="Chromosome"/>
</dbReference>
<dbReference type="GO" id="GO:0005737">
    <property type="term" value="C:cytoplasm"/>
    <property type="evidence" value="ECO:0007669"/>
    <property type="project" value="UniProtKB-SubCell"/>
</dbReference>
<dbReference type="GO" id="GO:0004807">
    <property type="term" value="F:triose-phosphate isomerase activity"/>
    <property type="evidence" value="ECO:0007669"/>
    <property type="project" value="UniProtKB-UniRule"/>
</dbReference>
<dbReference type="GO" id="GO:0006094">
    <property type="term" value="P:gluconeogenesis"/>
    <property type="evidence" value="ECO:0007669"/>
    <property type="project" value="UniProtKB-UniRule"/>
</dbReference>
<dbReference type="GO" id="GO:0006096">
    <property type="term" value="P:glycolytic process"/>
    <property type="evidence" value="ECO:0007669"/>
    <property type="project" value="UniProtKB-UniRule"/>
</dbReference>
<dbReference type="CDD" id="cd00311">
    <property type="entry name" value="TIM"/>
    <property type="match status" value="1"/>
</dbReference>
<dbReference type="FunFam" id="3.20.20.70:FF:000223">
    <property type="entry name" value="Triosephosphate isomerase"/>
    <property type="match status" value="1"/>
</dbReference>
<dbReference type="Gene3D" id="3.20.20.70">
    <property type="entry name" value="Aldolase class I"/>
    <property type="match status" value="1"/>
</dbReference>
<dbReference type="HAMAP" id="MF_00147_A">
    <property type="entry name" value="TIM_A"/>
    <property type="match status" value="1"/>
</dbReference>
<dbReference type="InterPro" id="IPR013785">
    <property type="entry name" value="Aldolase_TIM"/>
</dbReference>
<dbReference type="InterPro" id="IPR035990">
    <property type="entry name" value="TIM_sf"/>
</dbReference>
<dbReference type="InterPro" id="IPR000652">
    <property type="entry name" value="Triosephosphate_isomerase"/>
</dbReference>
<dbReference type="InterPro" id="IPR022891">
    <property type="entry name" value="Triosephosphate_isomerase_arc"/>
</dbReference>
<dbReference type="InterPro" id="IPR020861">
    <property type="entry name" value="Triosephosphate_isomerase_AS"/>
</dbReference>
<dbReference type="NCBIfam" id="NF003302">
    <property type="entry name" value="PRK04302.1"/>
    <property type="match status" value="1"/>
</dbReference>
<dbReference type="NCBIfam" id="TIGR00419">
    <property type="entry name" value="tim"/>
    <property type="match status" value="1"/>
</dbReference>
<dbReference type="Pfam" id="PF00121">
    <property type="entry name" value="TIM"/>
    <property type="match status" value="1"/>
</dbReference>
<dbReference type="SUPFAM" id="SSF51351">
    <property type="entry name" value="Triosephosphate isomerase (TIM)"/>
    <property type="match status" value="1"/>
</dbReference>
<dbReference type="PROSITE" id="PS00171">
    <property type="entry name" value="TIM_1"/>
    <property type="match status" value="1"/>
</dbReference>
<dbReference type="PROSITE" id="PS51440">
    <property type="entry name" value="TIM_2"/>
    <property type="match status" value="1"/>
</dbReference>
<accession>Q9UWN5</accession>
<accession>E3GXC8</accession>
<organism>
    <name type="scientific">Methanothermus fervidus (strain ATCC 43054 / DSM 2088 / JCM 10308 / V24 S)</name>
    <dbReference type="NCBI Taxonomy" id="523846"/>
    <lineage>
        <taxon>Archaea</taxon>
        <taxon>Methanobacteriati</taxon>
        <taxon>Methanobacteriota</taxon>
        <taxon>Methanomada group</taxon>
        <taxon>Methanobacteria</taxon>
        <taxon>Methanobacteriales</taxon>
        <taxon>Methanothermaceae</taxon>
        <taxon>Methanothermus</taxon>
    </lineage>
</organism>
<comment type="function">
    <text evidence="1">Involved in the gluconeogenesis. Catalyzes stereospecifically the conversion of dihydroxyacetone phosphate (DHAP) to D-glyceraldehyde-3-phosphate (G3P).</text>
</comment>
<comment type="catalytic activity">
    <reaction evidence="1">
        <text>D-glyceraldehyde 3-phosphate = dihydroxyacetone phosphate</text>
        <dbReference type="Rhea" id="RHEA:18585"/>
        <dbReference type="ChEBI" id="CHEBI:57642"/>
        <dbReference type="ChEBI" id="CHEBI:59776"/>
        <dbReference type="EC" id="5.3.1.1"/>
    </reaction>
</comment>
<comment type="pathway">
    <text evidence="1">Carbohydrate biosynthesis; gluconeogenesis.</text>
</comment>
<comment type="pathway">
    <text evidence="1">Carbohydrate degradation; glycolysis; D-glyceraldehyde 3-phosphate from glycerone phosphate: step 1/1.</text>
</comment>
<comment type="subunit">
    <text evidence="1">Homotetramer; dimer of dimers.</text>
</comment>
<comment type="subcellular location">
    <subcellularLocation>
        <location evidence="1">Cytoplasm</location>
    </subcellularLocation>
</comment>
<comment type="similarity">
    <text evidence="1">Belongs to the triosephosphate isomerase family.</text>
</comment>
<sequence>MDRPIIVLNFKTYKESTGENALKLAKKCEQVSEEYGVKIIVAPQHMDLRYVSENVNIPVIAQHIDPIDAGGHTGSVLLECAKEAGAKGSLVNHSEKRMKLADISKVVKKLSENDMISIVCTNNVETSAAAAALSPDFVAVEPPELIGSGIPVSKAKPEVVENTVEAVKTVNPDVRVLCGAGISSGEDVKKAVELGTEGVLLASGVILAKDQKKALEELITEM</sequence>
<protein>
    <recommendedName>
        <fullName evidence="1">Triosephosphate isomerase</fullName>
        <shortName evidence="1">TIM</shortName>
        <shortName evidence="1">TPI</shortName>
        <ecNumber evidence="1">5.3.1.1</ecNumber>
    </recommendedName>
    <alternativeName>
        <fullName evidence="1">Triose-phosphate isomerase</fullName>
    </alternativeName>
</protein>
<proteinExistence type="inferred from homology"/>
<name>TPIS_METFV</name>
<gene>
    <name evidence="1" type="primary">tpiA</name>
    <name type="synonym">tpi</name>
    <name type="ordered locus">Mfer_0157</name>
</gene>
<feature type="chain" id="PRO_0000090334" description="Triosephosphate isomerase">
    <location>
        <begin position="1"/>
        <end position="222"/>
    </location>
</feature>
<feature type="active site" description="Electrophile" evidence="1">
    <location>
        <position position="93"/>
    </location>
</feature>
<feature type="active site" description="Proton acceptor" evidence="1">
    <location>
        <position position="141"/>
    </location>
</feature>
<feature type="binding site" evidence="1">
    <location>
        <begin position="9"/>
        <end position="11"/>
    </location>
    <ligand>
        <name>substrate</name>
    </ligand>
</feature>
<feature type="binding site" evidence="1">
    <location>
        <position position="146"/>
    </location>
    <ligand>
        <name>substrate</name>
    </ligand>
</feature>
<feature type="binding site" evidence="1">
    <location>
        <position position="181"/>
    </location>
    <ligand>
        <name>substrate</name>
    </ligand>
</feature>
<feature type="binding site" evidence="1">
    <location>
        <begin position="202"/>
        <end position="203"/>
    </location>
    <ligand>
        <name>substrate</name>
    </ligand>
</feature>
<evidence type="ECO:0000255" key="1">
    <source>
        <dbReference type="HAMAP-Rule" id="MF_00147"/>
    </source>
</evidence>
<keyword id="KW-0963">Cytoplasm</keyword>
<keyword id="KW-0312">Gluconeogenesis</keyword>
<keyword id="KW-0324">Glycolysis</keyword>
<keyword id="KW-0413">Isomerase</keyword>
<keyword id="KW-1185">Reference proteome</keyword>
<reference key="1">
    <citation type="thesis" date="1998" institute="Universitaet-GH Essen" country="Germany">
        <authorList>
            <person name="Schramm A."/>
        </authorList>
    </citation>
    <scope>NUCLEOTIDE SEQUENCE [GENOMIC DNA]</scope>
    <source>
        <strain>ATCC 43054 / DSM 2088 / JCM 10308 / V24 S</strain>
    </source>
</reference>
<reference key="2">
    <citation type="journal article" date="2010" name="Stand. Genomic Sci.">
        <title>Complete genome sequence of Methanothermus fervidus type strain (V24S).</title>
        <authorList>
            <person name="Anderson I."/>
            <person name="Djao O.D."/>
            <person name="Misra M."/>
            <person name="Chertkov O."/>
            <person name="Nolan M."/>
            <person name="Lucas S."/>
            <person name="Lapidus A."/>
            <person name="Del Rio T.G."/>
            <person name="Tice H."/>
            <person name="Cheng J.F."/>
            <person name="Tapia R."/>
            <person name="Han C."/>
            <person name="Goodwin L."/>
            <person name="Pitluck S."/>
            <person name="Liolios K."/>
            <person name="Ivanova N."/>
            <person name="Mavromatis K."/>
            <person name="Mikhailova N."/>
            <person name="Pati A."/>
            <person name="Brambilla E."/>
            <person name="Chen A."/>
            <person name="Palaniappan K."/>
            <person name="Land M."/>
            <person name="Hauser L."/>
            <person name="Chang Y.J."/>
            <person name="Jeffries C.D."/>
            <person name="Sikorski J."/>
            <person name="Spring S."/>
            <person name="Rohde M."/>
            <person name="Eichinger K."/>
            <person name="Huber H."/>
            <person name="Wirth R."/>
            <person name="Goker M."/>
            <person name="Detter J.C."/>
            <person name="Woyke T."/>
            <person name="Bristow J."/>
            <person name="Eisen J.A."/>
            <person name="Markowitz V."/>
            <person name="Hugenholtz P."/>
            <person name="Klenk H.P."/>
            <person name="Kyrpides N.C."/>
        </authorList>
    </citation>
    <scope>NUCLEOTIDE SEQUENCE [LARGE SCALE GENOMIC DNA]</scope>
    <source>
        <strain>ATCC 43054 / DSM 2088 / JCM 10308 / V24 S</strain>
    </source>
</reference>